<keyword id="KW-0007">Acetylation</keyword>
<keyword id="KW-0488">Methylation</keyword>
<keyword id="KW-0687">Ribonucleoprotein</keyword>
<keyword id="KW-0689">Ribosomal protein</keyword>
<keyword id="KW-0694">RNA-binding</keyword>
<keyword id="KW-0699">rRNA-binding</keyword>
<keyword id="KW-0820">tRNA-binding</keyword>
<protein>
    <recommendedName>
        <fullName evidence="2">Small ribosomal subunit protein uS12</fullName>
    </recommendedName>
    <alternativeName>
        <fullName evidence="3">30S ribosomal protein S12</fullName>
    </alternativeName>
</protein>
<comment type="function">
    <text evidence="2">With S4 and S5 plays an important role in translational accuracy.</text>
</comment>
<comment type="function">
    <text evidence="2">Interacts with and stabilizes bases of the 16S rRNA that are involved in tRNA selection in the A site and with the mRNA backbone. Located at the interface of the 30S and 50S subunits, it traverses the body of the 30S subunit contacting proteins on the other side and probably holding the rRNA structure together. The combined cluster of proteins S8, S12 and S17 appears to hold together the shoulder and platform of the 30S subunit.</text>
</comment>
<comment type="subunit">
    <text evidence="2">Part of the 30S ribosomal subunit. Contacts proteins S8 and S17. May interact with IF1 in the 30S initiation complex.</text>
</comment>
<comment type="similarity">
    <text evidence="2">Belongs to the universal ribosomal protein uS12 family.</text>
</comment>
<proteinExistence type="inferred from homology"/>
<reference key="1">
    <citation type="journal article" date="2009" name="PLoS Genet.">
        <title>Organised genome dynamics in the Escherichia coli species results in highly diverse adaptive paths.</title>
        <authorList>
            <person name="Touchon M."/>
            <person name="Hoede C."/>
            <person name="Tenaillon O."/>
            <person name="Barbe V."/>
            <person name="Baeriswyl S."/>
            <person name="Bidet P."/>
            <person name="Bingen E."/>
            <person name="Bonacorsi S."/>
            <person name="Bouchier C."/>
            <person name="Bouvet O."/>
            <person name="Calteau A."/>
            <person name="Chiapello H."/>
            <person name="Clermont O."/>
            <person name="Cruveiller S."/>
            <person name="Danchin A."/>
            <person name="Diard M."/>
            <person name="Dossat C."/>
            <person name="Karoui M.E."/>
            <person name="Frapy E."/>
            <person name="Garry L."/>
            <person name="Ghigo J.M."/>
            <person name="Gilles A.M."/>
            <person name="Johnson J."/>
            <person name="Le Bouguenec C."/>
            <person name="Lescat M."/>
            <person name="Mangenot S."/>
            <person name="Martinez-Jehanne V."/>
            <person name="Matic I."/>
            <person name="Nassif X."/>
            <person name="Oztas S."/>
            <person name="Petit M.A."/>
            <person name="Pichon C."/>
            <person name="Rouy Z."/>
            <person name="Ruf C.S."/>
            <person name="Schneider D."/>
            <person name="Tourret J."/>
            <person name="Vacherie B."/>
            <person name="Vallenet D."/>
            <person name="Medigue C."/>
            <person name="Rocha E.P.C."/>
            <person name="Denamur E."/>
        </authorList>
    </citation>
    <scope>NUCLEOTIDE SEQUENCE [LARGE SCALE GENOMIC DNA]</scope>
    <source>
        <strain>ED1a</strain>
    </source>
</reference>
<gene>
    <name evidence="2" type="primary">rpsL</name>
    <name type="ordered locus">ECED1_4002</name>
</gene>
<sequence length="124" mass="13737">MATVNQLVRKPRARKVAKSNVPALEACPQKRGVCTRVYTTTPKKPNSALRKVCRVRLTNGFEVTSYIGGEGHNLQEHSVILIRGGRVKDLPGVRYHTVRGALDCSGVKDRKQARSKYGVKRPKA</sequence>
<name>RS12_ECO81</name>
<organism>
    <name type="scientific">Escherichia coli O81 (strain ED1a)</name>
    <dbReference type="NCBI Taxonomy" id="585397"/>
    <lineage>
        <taxon>Bacteria</taxon>
        <taxon>Pseudomonadati</taxon>
        <taxon>Pseudomonadota</taxon>
        <taxon>Gammaproteobacteria</taxon>
        <taxon>Enterobacterales</taxon>
        <taxon>Enterobacteriaceae</taxon>
        <taxon>Escherichia</taxon>
    </lineage>
</organism>
<evidence type="ECO:0000250" key="1"/>
<evidence type="ECO:0000255" key="2">
    <source>
        <dbReference type="HAMAP-Rule" id="MF_00403"/>
    </source>
</evidence>
<evidence type="ECO:0000305" key="3"/>
<feature type="chain" id="PRO_1000134635" description="Small ribosomal subunit protein uS12">
    <location>
        <begin position="1"/>
        <end position="124"/>
    </location>
</feature>
<feature type="modified residue" description="3-methylthioaspartic acid" evidence="1">
    <location>
        <position position="89"/>
    </location>
</feature>
<feature type="modified residue" description="N6-acetyllysine" evidence="2">
    <location>
        <position position="108"/>
    </location>
</feature>
<dbReference type="EMBL" id="CU928162">
    <property type="protein sequence ID" value="CAR10141.2"/>
    <property type="molecule type" value="Genomic_DNA"/>
</dbReference>
<dbReference type="RefSeq" id="WP_000246815.1">
    <property type="nucleotide sequence ID" value="NC_011745.1"/>
</dbReference>
<dbReference type="SMR" id="B7N1C3"/>
<dbReference type="GeneID" id="98390450"/>
<dbReference type="KEGG" id="ecq:ECED1_4002"/>
<dbReference type="HOGENOM" id="CLU_104295_1_2_6"/>
<dbReference type="Proteomes" id="UP000000748">
    <property type="component" value="Chromosome"/>
</dbReference>
<dbReference type="GO" id="GO:0015935">
    <property type="term" value="C:small ribosomal subunit"/>
    <property type="evidence" value="ECO:0007669"/>
    <property type="project" value="InterPro"/>
</dbReference>
<dbReference type="GO" id="GO:0019843">
    <property type="term" value="F:rRNA binding"/>
    <property type="evidence" value="ECO:0007669"/>
    <property type="project" value="UniProtKB-UniRule"/>
</dbReference>
<dbReference type="GO" id="GO:0003735">
    <property type="term" value="F:structural constituent of ribosome"/>
    <property type="evidence" value="ECO:0007669"/>
    <property type="project" value="InterPro"/>
</dbReference>
<dbReference type="GO" id="GO:0000049">
    <property type="term" value="F:tRNA binding"/>
    <property type="evidence" value="ECO:0007669"/>
    <property type="project" value="UniProtKB-UniRule"/>
</dbReference>
<dbReference type="GO" id="GO:0006412">
    <property type="term" value="P:translation"/>
    <property type="evidence" value="ECO:0007669"/>
    <property type="project" value="UniProtKB-UniRule"/>
</dbReference>
<dbReference type="CDD" id="cd03368">
    <property type="entry name" value="Ribosomal_S12"/>
    <property type="match status" value="1"/>
</dbReference>
<dbReference type="FunFam" id="2.40.50.140:FF:000001">
    <property type="entry name" value="30S ribosomal protein S12"/>
    <property type="match status" value="1"/>
</dbReference>
<dbReference type="Gene3D" id="2.40.50.140">
    <property type="entry name" value="Nucleic acid-binding proteins"/>
    <property type="match status" value="1"/>
</dbReference>
<dbReference type="HAMAP" id="MF_00403_B">
    <property type="entry name" value="Ribosomal_uS12_B"/>
    <property type="match status" value="1"/>
</dbReference>
<dbReference type="InterPro" id="IPR012340">
    <property type="entry name" value="NA-bd_OB-fold"/>
</dbReference>
<dbReference type="InterPro" id="IPR006032">
    <property type="entry name" value="Ribosomal_uS12"/>
</dbReference>
<dbReference type="InterPro" id="IPR005679">
    <property type="entry name" value="Ribosomal_uS12_bac"/>
</dbReference>
<dbReference type="NCBIfam" id="TIGR00981">
    <property type="entry name" value="rpsL_bact"/>
    <property type="match status" value="1"/>
</dbReference>
<dbReference type="PANTHER" id="PTHR11652">
    <property type="entry name" value="30S RIBOSOMAL PROTEIN S12 FAMILY MEMBER"/>
    <property type="match status" value="1"/>
</dbReference>
<dbReference type="Pfam" id="PF00164">
    <property type="entry name" value="Ribosom_S12_S23"/>
    <property type="match status" value="1"/>
</dbReference>
<dbReference type="PIRSF" id="PIRSF002133">
    <property type="entry name" value="Ribosomal_S12/S23"/>
    <property type="match status" value="1"/>
</dbReference>
<dbReference type="PRINTS" id="PR01034">
    <property type="entry name" value="RIBOSOMALS12"/>
</dbReference>
<dbReference type="SUPFAM" id="SSF50249">
    <property type="entry name" value="Nucleic acid-binding proteins"/>
    <property type="match status" value="1"/>
</dbReference>
<dbReference type="PROSITE" id="PS00055">
    <property type="entry name" value="RIBOSOMAL_S12"/>
    <property type="match status" value="1"/>
</dbReference>
<accession>B7N1C3</accession>